<protein>
    <recommendedName>
        <fullName evidence="5">Dihydromethanophenazine:CoB--CoM heterodisulfide reductase subunit E</fullName>
        <ecNumber evidence="4">1.8.98.1</ecNumber>
    </recommendedName>
    <alternativeName>
        <fullName evidence="5">CoB--CoM heterodisulfide reductase subunit E</fullName>
    </alternativeName>
    <alternativeName>
        <fullName evidence="5">Coenzyme B:coenzyme M:methanophenazine oxidoreductase subunit E</fullName>
    </alternativeName>
</protein>
<accession>Q8PVW4</accession>
<comment type="function">
    <text evidence="4">Part of a complex that catalyzes the reversible reduction of CoM-S-S-CoB to the thiol-coenzymes H-S-CoM (coenzyme M) and H-S-CoB (coenzyme B). HdrE may be responsible for anchoring the complex to the membrane.</text>
</comment>
<comment type="catalytic activity">
    <reaction evidence="4">
        <text>methanophenazine + coenzyme B + coenzyme M = dihydromethanophenazine + coenzyme M-coenzyme B heterodisulfide</text>
        <dbReference type="Rhea" id="RHEA:18085"/>
        <dbReference type="ChEBI" id="CHEBI:29118"/>
        <dbReference type="ChEBI" id="CHEBI:50375"/>
        <dbReference type="ChEBI" id="CHEBI:58319"/>
        <dbReference type="ChEBI" id="CHEBI:58411"/>
        <dbReference type="ChEBI" id="CHEBI:58596"/>
        <dbReference type="EC" id="1.8.98.1"/>
    </reaction>
</comment>
<comment type="cofactor">
    <cofactor evidence="1">
        <name>heme b</name>
        <dbReference type="ChEBI" id="CHEBI:60344"/>
    </cofactor>
    <text evidence="1">Binds 2 heme b (iron(II)-protoporphyrin IX) groups per subunit.</text>
</comment>
<comment type="pathway">
    <text evidence="5">Cofactor metabolism; coenzyme M-coenzyme B heterodisulfide reduction; coenzyme B and coenzyme M from coenzyme M-coenzyme B heterodisulfide: step 1/1.</text>
</comment>
<comment type="subunit">
    <text evidence="2">The dihydromethanophenazine:CoB--CoM heterodisulfide reductase is composed of two subunits; HdrD and HdrE.</text>
</comment>
<comment type="subcellular location">
    <subcellularLocation>
        <location evidence="4">Cell membrane</location>
        <topology evidence="3">Multi-pass membrane protein</topology>
    </subcellularLocation>
</comment>
<comment type="miscellaneous">
    <text evidence="6">Methanophenazine seems to mediate electron transfer from F(420)H(2) dehydrogenase to the dihydromethanophenazine:CoB--CoM heterodisulfide reductase.</text>
</comment>
<comment type="similarity">
    <text evidence="5">Belongs to the HdrE family.</text>
</comment>
<keyword id="KW-1003">Cell membrane</keyword>
<keyword id="KW-0349">Heme</keyword>
<keyword id="KW-0408">Iron</keyword>
<keyword id="KW-0472">Membrane</keyword>
<keyword id="KW-0479">Metal-binding</keyword>
<keyword id="KW-0484">Methanogenesis</keyword>
<keyword id="KW-0560">Oxidoreductase</keyword>
<keyword id="KW-0812">Transmembrane</keyword>
<keyword id="KW-1133">Transmembrane helix</keyword>
<sequence length="259" mass="28989">MAYFSGLSDALRLTFVQIMILSAIAVVIFLYGMIGNFQKWGAGVTGYALEPPTGKKGSAIRFLKTWWAQVRAESHHHGKPILEVLILDIFFQRRILKRSPIRWFMHFTIFAGWMSLFALSGLMFAVEMTEKIGIELPFTPAEFREMLSLPNYIFGYILLIGVMIAVVRRLFVSEVREASIMYDWVLLGGVFIVTISGFIADGIRTGIIWGFGLDPVTAPPAALFHSVISLLFCIAYIPYSKYIHVIATPLAILANKGGE</sequence>
<proteinExistence type="evidence at protein level"/>
<name>HDRE_METMA</name>
<gene>
    <name type="primary">hdrE</name>
    <name type="ordered locus">MM_1843</name>
</gene>
<organism>
    <name type="scientific">Methanosarcina mazei (strain ATCC BAA-159 / DSM 3647 / Goe1 / Go1 / JCM 11833 / OCM 88)</name>
    <name type="common">Methanosarcina frisia</name>
    <dbReference type="NCBI Taxonomy" id="192952"/>
    <lineage>
        <taxon>Archaea</taxon>
        <taxon>Methanobacteriati</taxon>
        <taxon>Methanobacteriota</taxon>
        <taxon>Stenosarchaea group</taxon>
        <taxon>Methanomicrobia</taxon>
        <taxon>Methanosarcinales</taxon>
        <taxon>Methanosarcinaceae</taxon>
        <taxon>Methanosarcina</taxon>
    </lineage>
</organism>
<evidence type="ECO:0000250" key="1">
    <source>
        <dbReference type="UniProtKB" id="A0A0E3NFS5"/>
    </source>
</evidence>
<evidence type="ECO:0000250" key="2">
    <source>
        <dbReference type="UniProtKB" id="P96796"/>
    </source>
</evidence>
<evidence type="ECO:0000255" key="3"/>
<evidence type="ECO:0000269" key="4">
    <source>
    </source>
</evidence>
<evidence type="ECO:0000305" key="5"/>
<evidence type="ECO:0000305" key="6">
    <source>
    </source>
</evidence>
<feature type="chain" id="PRO_0000150084" description="Dihydromethanophenazine:CoB--CoM heterodisulfide reductase subunit E">
    <location>
        <begin position="1"/>
        <end position="259"/>
    </location>
</feature>
<feature type="transmembrane region" description="Helical" evidence="3">
    <location>
        <begin position="15"/>
        <end position="35"/>
    </location>
</feature>
<feature type="transmembrane region" description="Helical" evidence="3">
    <location>
        <begin position="104"/>
        <end position="124"/>
    </location>
</feature>
<feature type="transmembrane region" description="Helical" evidence="3">
    <location>
        <begin position="147"/>
        <end position="167"/>
    </location>
</feature>
<feature type="transmembrane region" description="Helical" evidence="3">
    <location>
        <begin position="180"/>
        <end position="200"/>
    </location>
</feature>
<feature type="transmembrane region" description="Helical" evidence="3">
    <location>
        <begin position="218"/>
        <end position="238"/>
    </location>
</feature>
<dbReference type="EC" id="1.8.98.1" evidence="4"/>
<dbReference type="EMBL" id="AE008384">
    <property type="protein sequence ID" value="AAM31539.1"/>
    <property type="molecule type" value="Genomic_DNA"/>
</dbReference>
<dbReference type="RefSeq" id="WP_011033778.1">
    <property type="nucleotide sequence ID" value="NC_003901.1"/>
</dbReference>
<dbReference type="TCDB" id="3.D.7.1.7">
    <property type="family name" value="the h2:heterodisulfide oxidoreductase (hho) family"/>
</dbReference>
<dbReference type="GeneID" id="82160896"/>
<dbReference type="KEGG" id="mma:MM_1843"/>
<dbReference type="PATRIC" id="fig|192952.21.peg.2128"/>
<dbReference type="eggNOG" id="arCOG05014">
    <property type="taxonomic scope" value="Archaea"/>
</dbReference>
<dbReference type="HOGENOM" id="CLU_1072042_0_0_2"/>
<dbReference type="UniPathway" id="UPA00647">
    <property type="reaction ID" value="UER00700"/>
</dbReference>
<dbReference type="Proteomes" id="UP000000595">
    <property type="component" value="Chromosome"/>
</dbReference>
<dbReference type="GO" id="GO:0005886">
    <property type="term" value="C:plasma membrane"/>
    <property type="evidence" value="ECO:0007669"/>
    <property type="project" value="UniProtKB-SubCell"/>
</dbReference>
<dbReference type="GO" id="GO:0051912">
    <property type="term" value="F:CoB--CoM heterodisulfide reductase activity"/>
    <property type="evidence" value="ECO:0007669"/>
    <property type="project" value="UniProtKB-EC"/>
</dbReference>
<dbReference type="GO" id="GO:0046872">
    <property type="term" value="F:metal ion binding"/>
    <property type="evidence" value="ECO:0007669"/>
    <property type="project" value="UniProtKB-KW"/>
</dbReference>
<dbReference type="GO" id="GO:0015948">
    <property type="term" value="P:methanogenesis"/>
    <property type="evidence" value="ECO:0007669"/>
    <property type="project" value="UniProtKB-KW"/>
</dbReference>
<dbReference type="Gene3D" id="1.20.950.20">
    <property type="entry name" value="Transmembrane di-heme cytochromes, Chain C"/>
    <property type="match status" value="1"/>
</dbReference>
<dbReference type="InterPro" id="IPR023234">
    <property type="entry name" value="NarG-like_domain"/>
</dbReference>
<dbReference type="InterPro" id="IPR036197">
    <property type="entry name" value="NarG-like_sf"/>
</dbReference>
<dbReference type="Pfam" id="PF02665">
    <property type="entry name" value="Nitrate_red_gam"/>
    <property type="match status" value="1"/>
</dbReference>
<dbReference type="SUPFAM" id="SSF103501">
    <property type="entry name" value="Respiratory nitrate reductase 1 gamma chain"/>
    <property type="match status" value="1"/>
</dbReference>
<reference key="1">
    <citation type="journal article" date="2002" name="J. Mol. Microbiol. Biotechnol.">
        <title>The genome of Methanosarcina mazei: evidence for lateral gene transfer between Bacteria and Archaea.</title>
        <authorList>
            <person name="Deppenmeier U."/>
            <person name="Johann A."/>
            <person name="Hartsch T."/>
            <person name="Merkl R."/>
            <person name="Schmitz R.A."/>
            <person name="Martinez-Arias R."/>
            <person name="Henne A."/>
            <person name="Wiezer A."/>
            <person name="Baeumer S."/>
            <person name="Jacobi C."/>
            <person name="Brueggemann H."/>
            <person name="Lienard T."/>
            <person name="Christmann A."/>
            <person name="Boemecke M."/>
            <person name="Steckel S."/>
            <person name="Bhattacharyya A."/>
            <person name="Lykidis A."/>
            <person name="Overbeek R."/>
            <person name="Klenk H.-P."/>
            <person name="Gunsalus R.P."/>
            <person name="Fritz H.-J."/>
            <person name="Gottschalk G."/>
        </authorList>
    </citation>
    <scope>NUCLEOTIDE SEQUENCE [LARGE SCALE GENOMIC DNA]</scope>
    <source>
        <strain>ATCC BAA-159 / DSM 3647 / Goe1 / Go1 / JCM 11833 / OCM 88</strain>
    </source>
</reference>
<reference key="2">
    <citation type="journal article" date="1998" name="J. Bacteriol.">
        <title>Isolation and characterization of methanophenazine and function of phenazines in membrane-bound electron transport of Methanosarcina mazei Goe1.</title>
        <authorList>
            <person name="Abken H.J."/>
            <person name="Tietze M."/>
            <person name="Brodersen J."/>
            <person name="Baeumer S."/>
            <person name="Beifuss U."/>
            <person name="Deppenmeier U."/>
        </authorList>
    </citation>
    <scope>FUNCTION</scope>
    <scope>CATALYTIC ACTIVITY</scope>
    <scope>SUBCELLULAR LOCATION</scope>
    <source>
        <strain>ATCC BAA-159 / DSM 3647 / Goe1 / Go1 / JCM 11833 / OCM 88</strain>
    </source>
</reference>